<organism>
    <name type="scientific">Platanus acerifolia</name>
    <name type="common">London plane tree</name>
    <dbReference type="NCBI Taxonomy" id="140101"/>
    <lineage>
        <taxon>Eukaryota</taxon>
        <taxon>Viridiplantae</taxon>
        <taxon>Streptophyta</taxon>
        <taxon>Embryophyta</taxon>
        <taxon>Tracheophyta</taxon>
        <taxon>Spermatophyta</taxon>
        <taxon>Magnoliopsida</taxon>
        <taxon>Proteales</taxon>
        <taxon>Platanaceae</taxon>
        <taxon>Platanus</taxon>
    </lineage>
</organism>
<dbReference type="EC" id="3.2.1.67" evidence="4"/>
<dbReference type="EMBL" id="AJ586898">
    <property type="protein sequence ID" value="CAE52833.1"/>
    <property type="molecule type" value="mRNA"/>
</dbReference>
<dbReference type="SMR" id="Q6H9K0"/>
<dbReference type="Allergome" id="3426">
    <property type="allergen name" value="Pla a 2.0101"/>
</dbReference>
<dbReference type="Allergome" id="573">
    <property type="allergen name" value="Pla a 2"/>
</dbReference>
<dbReference type="CAZy" id="GH28">
    <property type="family name" value="Glycoside Hydrolase Family 28"/>
</dbReference>
<dbReference type="GlyCosmos" id="Q6H9K0">
    <property type="glycosylation" value="2 sites, No reported glycans"/>
</dbReference>
<dbReference type="GO" id="GO:0005783">
    <property type="term" value="C:endoplasmic reticulum"/>
    <property type="evidence" value="ECO:0000314"/>
    <property type="project" value="UniProtKB"/>
</dbReference>
<dbReference type="GO" id="GO:0005576">
    <property type="term" value="C:extracellular region"/>
    <property type="evidence" value="ECO:0000314"/>
    <property type="project" value="UniProtKB"/>
</dbReference>
<dbReference type="GO" id="GO:0005794">
    <property type="term" value="C:Golgi apparatus"/>
    <property type="evidence" value="ECO:0000314"/>
    <property type="project" value="UniProtKB"/>
</dbReference>
<dbReference type="GO" id="GO:0043667">
    <property type="term" value="C:pollen wall"/>
    <property type="evidence" value="ECO:0000314"/>
    <property type="project" value="UniProtKB"/>
</dbReference>
<dbReference type="GO" id="GO:0031982">
    <property type="term" value="C:vesicle"/>
    <property type="evidence" value="ECO:0000314"/>
    <property type="project" value="UniProtKB"/>
</dbReference>
<dbReference type="GO" id="GO:0047911">
    <property type="term" value="F:galacturan 1,4-alpha-galacturonidase activity"/>
    <property type="evidence" value="ECO:0000314"/>
    <property type="project" value="UniProtKB"/>
</dbReference>
<dbReference type="GO" id="GO:0019863">
    <property type="term" value="F:IgE binding"/>
    <property type="evidence" value="ECO:0000314"/>
    <property type="project" value="UniProtKB"/>
</dbReference>
<dbReference type="GO" id="GO:0004650">
    <property type="term" value="F:polygalacturonase activity"/>
    <property type="evidence" value="ECO:0007669"/>
    <property type="project" value="InterPro"/>
</dbReference>
<dbReference type="GO" id="GO:0071555">
    <property type="term" value="P:cell wall organization"/>
    <property type="evidence" value="ECO:0007669"/>
    <property type="project" value="UniProtKB-KW"/>
</dbReference>
<dbReference type="GO" id="GO:0045490">
    <property type="term" value="P:pectin catabolic process"/>
    <property type="evidence" value="ECO:0000314"/>
    <property type="project" value="UniProtKB"/>
</dbReference>
<dbReference type="GO" id="GO:0009555">
    <property type="term" value="P:pollen development"/>
    <property type="evidence" value="ECO:0000270"/>
    <property type="project" value="UniProtKB"/>
</dbReference>
<dbReference type="GO" id="GO:0009846">
    <property type="term" value="P:pollen germination"/>
    <property type="evidence" value="ECO:0000270"/>
    <property type="project" value="UniProtKB"/>
</dbReference>
<dbReference type="GO" id="GO:0048868">
    <property type="term" value="P:pollen tube development"/>
    <property type="evidence" value="ECO:0000270"/>
    <property type="project" value="UniProtKB"/>
</dbReference>
<dbReference type="FunFam" id="2.160.20.10:FF:000004">
    <property type="entry name" value="Pectin lyase-like superfamily protein"/>
    <property type="match status" value="1"/>
</dbReference>
<dbReference type="Gene3D" id="2.160.20.10">
    <property type="entry name" value="Single-stranded right-handed beta-helix, Pectin lyase-like"/>
    <property type="match status" value="1"/>
</dbReference>
<dbReference type="InterPro" id="IPR000743">
    <property type="entry name" value="Glyco_hydro_28"/>
</dbReference>
<dbReference type="InterPro" id="IPR006626">
    <property type="entry name" value="PbH1"/>
</dbReference>
<dbReference type="InterPro" id="IPR012334">
    <property type="entry name" value="Pectin_lyas_fold"/>
</dbReference>
<dbReference type="InterPro" id="IPR011050">
    <property type="entry name" value="Pectin_lyase_fold/virulence"/>
</dbReference>
<dbReference type="PANTHER" id="PTHR31375">
    <property type="match status" value="1"/>
</dbReference>
<dbReference type="Pfam" id="PF00295">
    <property type="entry name" value="Glyco_hydro_28"/>
    <property type="match status" value="1"/>
</dbReference>
<dbReference type="SMART" id="SM00710">
    <property type="entry name" value="PbH1"/>
    <property type="match status" value="5"/>
</dbReference>
<dbReference type="SUPFAM" id="SSF51126">
    <property type="entry name" value="Pectin lyase-like"/>
    <property type="match status" value="1"/>
</dbReference>
<proteinExistence type="evidence at protein level"/>
<name>PGLR2_PLAAC</name>
<accession>Q6H9K0</accession>
<accession>P82967</accession>
<keyword id="KW-0020">Allergen</keyword>
<keyword id="KW-0134">Cell wall</keyword>
<keyword id="KW-0961">Cell wall biogenesis/degradation</keyword>
<keyword id="KW-0903">Direct protein sequencing</keyword>
<keyword id="KW-0256">Endoplasmic reticulum</keyword>
<keyword id="KW-0325">Glycoprotein</keyword>
<keyword id="KW-0326">Glycosidase</keyword>
<keyword id="KW-0333">Golgi apparatus</keyword>
<keyword id="KW-0378">Hydrolase</keyword>
<keyword id="KW-0677">Repeat</keyword>
<keyword id="KW-0964">Secreted</keyword>
<keyword id="KW-0732">Signal</keyword>
<evidence type="ECO:0000250" key="1"/>
<evidence type="ECO:0000250" key="2">
    <source>
        <dbReference type="UniProtKB" id="P24548"/>
    </source>
</evidence>
<evidence type="ECO:0000255" key="3"/>
<evidence type="ECO:0000269" key="4">
    <source>
    </source>
</evidence>
<evidence type="ECO:0000269" key="5">
    <source>
    </source>
</evidence>
<evidence type="ECO:0000269" key="6">
    <source ref="2"/>
</evidence>
<evidence type="ECO:0000303" key="7">
    <source>
    </source>
</evidence>
<evidence type="ECO:0000303" key="8">
    <source>
    </source>
</evidence>
<evidence type="ECO:0000303" key="9">
    <source ref="2"/>
</evidence>
<evidence type="ECO:0000305" key="10"/>
<evidence type="ECO:0000312" key="11">
    <source>
        <dbReference type="EMBL" id="CAE52833.1"/>
    </source>
</evidence>
<gene>
    <name evidence="11" type="primary">plaa2</name>
</gene>
<protein>
    <recommendedName>
        <fullName>Exopolygalacturonase</fullName>
        <ecNumber evidence="4">3.2.1.67</ecNumber>
    </recommendedName>
    <alternativeName>
        <fullName evidence="7 8 9">Pollen allergen Pla a 2</fullName>
    </alternativeName>
    <allergenName evidence="10">Pla a 2.0101</allergenName>
</protein>
<feature type="signal peptide" evidence="4">
    <location>
        <begin position="1" status="less than"/>
        <end position="5"/>
    </location>
</feature>
<feature type="chain" id="PRO_0000024821" description="Exopolygalacturonase" evidence="4">
    <location>
        <begin position="6"/>
        <end position="377"/>
    </location>
</feature>
<feature type="repeat" description="PbH1 1" evidence="3">
    <location>
        <begin position="159"/>
        <end position="184"/>
    </location>
</feature>
<feature type="repeat" description="PbH1 2" evidence="3">
    <location>
        <begin position="186"/>
        <end position="207"/>
    </location>
</feature>
<feature type="repeat" description="PbH1 3" evidence="3">
    <location>
        <begin position="209"/>
        <end position="229"/>
    </location>
</feature>
<feature type="repeat" description="PbH1 4" evidence="3">
    <location>
        <begin position="239"/>
        <end position="260"/>
    </location>
</feature>
<feature type="repeat" description="PbH1 5" evidence="3">
    <location>
        <begin position="269"/>
        <end position="290"/>
    </location>
</feature>
<feature type="active site" description="Proton donor" evidence="1">
    <location>
        <position position="200"/>
    </location>
</feature>
<feature type="active site" evidence="1">
    <location>
        <position position="223"/>
    </location>
</feature>
<feature type="glycosylation site" description="N-linked (GlcNAc...) asparagine" evidence="3">
    <location>
        <position position="211"/>
    </location>
</feature>
<feature type="glycosylation site" description="N-linked (GlcNAc...) asparagine" evidence="3">
    <location>
        <position position="345"/>
    </location>
</feature>
<feature type="non-terminal residue" evidence="11">
    <location>
        <position position="1"/>
    </location>
</feature>
<sequence>RGVQSSGSVFNVNDYGAKGAGDISQAVMKAWKAACASQGPSTVLIPKGNYNMGEVAMQGPCKGSKIGFQIDGVVKAPADPSKFKSDGWVSFYRIDGLTVSGTGTLDGQGQTAWAKNNCDKNPNCKHAAMNLRFDFLKHAMVRDITSLNSKMFHINVLECEDITFQHVTVTAPGTSINTDGIHVGISKGVTITNTKIATGDDCISIGPGSQNVTITQVNCGPGHGISIGSLGRYNNEKEVRGITVKGCTFSGTMNGVRVKTWPNSPPGAATDLTFQDLTMNNVQNPVILDQEYCPYGQCSRQAPSRIKLSNINFNNIRGTSTGKVAVVIACSHGMPCSNMKIGEINLSYRGAGGPATSTCSNVKPTFSGKQVPAIKCA</sequence>
<reference evidence="10 11" key="1">
    <citation type="journal article" date="2004" name="J. Allergy Clin. Immunol.">
        <title>Identification of a polygalacturonase as a major allergen (Pla a 2) from Platanus acerifolia pollen.</title>
        <authorList>
            <person name="Ibarrola I."/>
            <person name="Arilla M.C."/>
            <person name="Martinez A."/>
            <person name="Asturias J.A."/>
        </authorList>
    </citation>
    <scope>NUCLEOTIDE SEQUENCE [MRNA]</scope>
    <scope>PROTEIN SEQUENCE OF 6-25; 130-137; 340-347 AND 349-358</scope>
    <scope>GLYCOSYLATION</scope>
    <scope>CATALYTIC ACTIVITY</scope>
    <scope>SUBUNIT</scope>
    <scope>TISSUE SPECIFICITY</scope>
    <scope>ALLERGEN</scope>
    <source>
        <tissue evidence="11">Pollen</tissue>
    </source>
</reference>
<reference key="2">
    <citation type="journal article" date="2005" name="Sex. Plant Reprod.">
        <title>The role of allergenic proteins Pla a 1 and Pla a 2 in the germination of Platanus acerifolia pollen grains.</title>
        <authorList>
            <person name="Suarez-Cervera M."/>
            <person name="Asturias J.A."/>
            <person name="Vega-Maray A."/>
            <person name="Castells T."/>
            <person name="Lopez-Iglesias C."/>
            <person name="Ibarrola I."/>
            <person name="Arilla M.C."/>
            <person name="Gabarayeva N."/>
            <person name="Seoane-Camba J.A."/>
        </authorList>
    </citation>
    <scope>SUBCELLULAR LOCATION</scope>
    <scope>TISSUE SPECIFICITY</scope>
</reference>
<reference key="3">
    <citation type="journal article" date="2006" name="Clin. Exp. Allergy">
        <title>Purified allergens vs. complete extract in the diagnosis of plane tree pollen allergy.</title>
        <authorList>
            <person name="Asturias J.A."/>
            <person name="Ibarrola I."/>
            <person name="Amat P."/>
            <person name="Tella R."/>
            <person name="Malet A."/>
            <person name="Cistero-Bahima A."/>
            <person name="Enrique E."/>
            <person name="Malek T."/>
            <person name="Martinez A."/>
        </authorList>
    </citation>
    <scope>TISSUE SPECIFICITY</scope>
    <scope>ALLERGEN</scope>
    <scope>BIOTECHNOLOGY</scope>
</reference>
<comment type="function">
    <text evidence="2 4">May function in depolymerizing pectin during pollen development, germination, and tube growth. Acts as an exo-polygalacturonase.</text>
</comment>
<comment type="catalytic activity">
    <reaction evidence="4">
        <text>[(1-&gt;4)-alpha-D-galacturonosyl](n) + H2O = alpha-D-galacturonate + [(1-&gt;4)-alpha-D-galacturonosyl](n-1)</text>
        <dbReference type="Rhea" id="RHEA:14117"/>
        <dbReference type="Rhea" id="RHEA-COMP:14570"/>
        <dbReference type="Rhea" id="RHEA-COMP:14572"/>
        <dbReference type="ChEBI" id="CHEBI:15377"/>
        <dbReference type="ChEBI" id="CHEBI:58658"/>
        <dbReference type="ChEBI" id="CHEBI:140523"/>
        <dbReference type="EC" id="3.2.1.67"/>
    </reaction>
</comment>
<comment type="biophysicochemical properties">
    <phDependence>
        <text>Optimum pH is 4.0.</text>
    </phDependence>
    <temperatureDependence>
        <text>Optimum temperature is 50 degrees Celsius.</text>
    </temperatureDependence>
</comment>
<comment type="subunit">
    <text evidence="4">Monomer.</text>
</comment>
<comment type="subcellular location">
    <subcellularLocation>
        <location evidence="6">Secreted</location>
    </subcellularLocation>
    <subcellularLocation>
        <location evidence="6">Secreted</location>
        <location evidence="6">Cell wall</location>
    </subcellularLocation>
    <subcellularLocation>
        <location evidence="6">Golgi apparatus</location>
    </subcellularLocation>
    <subcellularLocation>
        <location evidence="6">Endoplasmic reticulum</location>
    </subcellularLocation>
    <subcellularLocation>
        <location evidence="6">Vesicle</location>
    </subcellularLocation>
    <text evidence="6">After 5 minutes in germination medium, detected as a soluble protein and released from apertural and non-apertural regions of pollen grain wall. After 15 and 30 minutes, abundant in the germinal aperture. After 2 hours in germination medium, localization in these regions decreases. In mature, non-hydrated pollen grains, abundant in cisternae and vesicles of Golgi in the apertural region. Sparse in the center of the cytoplasm, associated with cisternae and vesicles of the endoplasmic reticulum (ER) and abundant in the generative cell wall. After 5 minutes of hydration, localization to these regions decreases. After 15 minutes of hydration, present around emergent pollen tube and in the center of the vegetative cell, both in the ER and Golgi. After 30 minutes of hydration, present in juncture between pollen wall and pollen tube. Abundant in the ER cisternae, which show a disorganized and interrupted concentric structure with numerous ER vesicles linked to Golgi vesicles.</text>
</comment>
<comment type="tissue specificity">
    <text evidence="4 5 6">Expressed in pollen (at protein level) (PubMed:15208603, PubMed:17177673, Ref.2). Expressed in stem, but not in leaves (at protein level) (PubMed:15208603).</text>
</comment>
<comment type="PTM">
    <text evidence="4">Glycosylated.</text>
</comment>
<comment type="allergen">
    <text evidence="4 5">Causes an allergic reaction in human. Binds to IgE of patients allergic to London plane tree pollen (PubMed:15208603, PubMed:17177673). Binds to IgE in 84% of the 26 patients tested (PubMed:15208603). Binds to IgE in 50% of the 26 patients tested (PubMed:17177673).</text>
</comment>
<comment type="biotechnology">
    <text evidence="5">Could be used together with allergen Pla a 1 for a reliable diagnosis of London plane tree (P.acerifolia) pollen allergy by skin prick test (SPT) in most patients of the cohort of 47 tested with a sensitivity of over 90% and a specificity of 100%.</text>
</comment>
<comment type="similarity">
    <text evidence="10">Belongs to the glycosyl hydrolase 28 family.</text>
</comment>